<proteinExistence type="inferred from homology"/>
<feature type="chain" id="PRO_0000107775" description="Nucleotide-binding protein spyM18_0713">
    <location>
        <begin position="1"/>
        <end position="296"/>
    </location>
</feature>
<feature type="binding site" evidence="1">
    <location>
        <begin position="13"/>
        <end position="20"/>
    </location>
    <ligand>
        <name>ATP</name>
        <dbReference type="ChEBI" id="CHEBI:30616"/>
    </ligand>
</feature>
<feature type="binding site" evidence="1">
    <location>
        <begin position="63"/>
        <end position="66"/>
    </location>
    <ligand>
        <name>GTP</name>
        <dbReference type="ChEBI" id="CHEBI:37565"/>
    </ligand>
</feature>
<sequence>MSDKHINLVIVTGMSGAGKTVAIQSFEDLGYFTIDNMPPALVPKFLELIEQTNENRRVALVVDMRSRLFFKEINSTLDSIESNPSIDFWILFLDATDGELVSRYKETRRSHPLAADGRVLDGIRLERELLSPLKSMSQHVVDTTKLTPRQLRKTISDQFSEGSNQASFRIEVMSFGFKYGLPLDADLVFDVRFLPNPYYQVELREKTGLDEDVFNYVMSHPESEVFYKHLLNLIVPILPAYQKEGKSVLTVAIGCTGGQHRSVAFAHCLAESLATDWSVNESHRDQNRRKETVNRS</sequence>
<dbReference type="EMBL" id="AE009949">
    <property type="protein sequence ID" value="AAL97384.1"/>
    <property type="molecule type" value="Genomic_DNA"/>
</dbReference>
<dbReference type="SMR" id="Q8P1T8"/>
<dbReference type="KEGG" id="spm:spyM18_0713"/>
<dbReference type="HOGENOM" id="CLU_059558_0_0_9"/>
<dbReference type="GO" id="GO:0005524">
    <property type="term" value="F:ATP binding"/>
    <property type="evidence" value="ECO:0007669"/>
    <property type="project" value="UniProtKB-UniRule"/>
</dbReference>
<dbReference type="GO" id="GO:0005525">
    <property type="term" value="F:GTP binding"/>
    <property type="evidence" value="ECO:0007669"/>
    <property type="project" value="UniProtKB-UniRule"/>
</dbReference>
<dbReference type="Gene3D" id="3.40.50.300">
    <property type="entry name" value="P-loop containing nucleotide triphosphate hydrolases"/>
    <property type="match status" value="1"/>
</dbReference>
<dbReference type="HAMAP" id="MF_00636">
    <property type="entry name" value="RapZ_like"/>
    <property type="match status" value="1"/>
</dbReference>
<dbReference type="InterPro" id="IPR027417">
    <property type="entry name" value="P-loop_NTPase"/>
</dbReference>
<dbReference type="InterPro" id="IPR005337">
    <property type="entry name" value="RapZ-like"/>
</dbReference>
<dbReference type="InterPro" id="IPR053930">
    <property type="entry name" value="RapZ-like_N"/>
</dbReference>
<dbReference type="InterPro" id="IPR053931">
    <property type="entry name" value="RapZ_C"/>
</dbReference>
<dbReference type="NCBIfam" id="NF003828">
    <property type="entry name" value="PRK05416.1"/>
    <property type="match status" value="1"/>
</dbReference>
<dbReference type="PANTHER" id="PTHR30448">
    <property type="entry name" value="RNASE ADAPTER PROTEIN RAPZ"/>
    <property type="match status" value="1"/>
</dbReference>
<dbReference type="PANTHER" id="PTHR30448:SF0">
    <property type="entry name" value="RNASE ADAPTER PROTEIN RAPZ"/>
    <property type="match status" value="1"/>
</dbReference>
<dbReference type="Pfam" id="PF22740">
    <property type="entry name" value="PapZ_C"/>
    <property type="match status" value="1"/>
</dbReference>
<dbReference type="Pfam" id="PF03668">
    <property type="entry name" value="RapZ-like_N"/>
    <property type="match status" value="1"/>
</dbReference>
<dbReference type="PIRSF" id="PIRSF005052">
    <property type="entry name" value="P-loopkin"/>
    <property type="match status" value="1"/>
</dbReference>
<dbReference type="SUPFAM" id="SSF52540">
    <property type="entry name" value="P-loop containing nucleoside triphosphate hydrolases"/>
    <property type="match status" value="1"/>
</dbReference>
<comment type="function">
    <text evidence="1">Displays ATPase and GTPase activities.</text>
</comment>
<comment type="similarity">
    <text evidence="1">Belongs to the RapZ-like family.</text>
</comment>
<protein>
    <recommendedName>
        <fullName evidence="1">Nucleotide-binding protein spyM18_0713</fullName>
    </recommendedName>
</protein>
<name>Y713_STRP8</name>
<organism>
    <name type="scientific">Streptococcus pyogenes serotype M18 (strain MGAS8232)</name>
    <dbReference type="NCBI Taxonomy" id="186103"/>
    <lineage>
        <taxon>Bacteria</taxon>
        <taxon>Bacillati</taxon>
        <taxon>Bacillota</taxon>
        <taxon>Bacilli</taxon>
        <taxon>Lactobacillales</taxon>
        <taxon>Streptococcaceae</taxon>
        <taxon>Streptococcus</taxon>
    </lineage>
</organism>
<accession>Q8P1T8</accession>
<gene>
    <name type="ordered locus">spyM18_0713</name>
</gene>
<keyword id="KW-0067">ATP-binding</keyword>
<keyword id="KW-0342">GTP-binding</keyword>
<keyword id="KW-0547">Nucleotide-binding</keyword>
<evidence type="ECO:0000255" key="1">
    <source>
        <dbReference type="HAMAP-Rule" id="MF_00636"/>
    </source>
</evidence>
<reference key="1">
    <citation type="journal article" date="2002" name="Proc. Natl. Acad. Sci. U.S.A.">
        <title>Genome sequence and comparative microarray analysis of serotype M18 group A Streptococcus strains associated with acute rheumatic fever outbreaks.</title>
        <authorList>
            <person name="Smoot J.C."/>
            <person name="Barbian K.D."/>
            <person name="Van Gompel J.J."/>
            <person name="Smoot L.M."/>
            <person name="Chaussee M.S."/>
            <person name="Sylva G.L."/>
            <person name="Sturdevant D.E."/>
            <person name="Ricklefs S.M."/>
            <person name="Porcella S.F."/>
            <person name="Parkins L.D."/>
            <person name="Beres S.B."/>
            <person name="Campbell D.S."/>
            <person name="Smith T.M."/>
            <person name="Zhang Q."/>
            <person name="Kapur V."/>
            <person name="Daly J.A."/>
            <person name="Veasy L.G."/>
            <person name="Musser J.M."/>
        </authorList>
    </citation>
    <scope>NUCLEOTIDE SEQUENCE [LARGE SCALE GENOMIC DNA]</scope>
    <source>
        <strain>MGAS8232</strain>
    </source>
</reference>